<proteinExistence type="inferred from homology"/>
<accession>A4G9R7</accession>
<feature type="chain" id="PRO_0000338839" description="Translation initiation factor IF-1">
    <location>
        <begin position="1"/>
        <end position="72"/>
    </location>
</feature>
<feature type="domain" description="S1-like" evidence="1">
    <location>
        <begin position="1"/>
        <end position="72"/>
    </location>
</feature>
<sequence>MAKDDVIQMQGEILENLPNATFRVKLENGHVVLGHISGKMRMNYIRILPGDKVTVELTPYDLSRARIVFRTK</sequence>
<organism>
    <name type="scientific">Herminiimonas arsenicoxydans</name>
    <dbReference type="NCBI Taxonomy" id="204773"/>
    <lineage>
        <taxon>Bacteria</taxon>
        <taxon>Pseudomonadati</taxon>
        <taxon>Pseudomonadota</taxon>
        <taxon>Betaproteobacteria</taxon>
        <taxon>Burkholderiales</taxon>
        <taxon>Oxalobacteraceae</taxon>
        <taxon>Herminiimonas</taxon>
    </lineage>
</organism>
<reference key="1">
    <citation type="journal article" date="2007" name="PLoS Genet.">
        <title>A tale of two oxidation states: bacterial colonization of arsenic-rich environments.</title>
        <authorList>
            <person name="Muller D."/>
            <person name="Medigue C."/>
            <person name="Koechler S."/>
            <person name="Barbe V."/>
            <person name="Barakat M."/>
            <person name="Talla E."/>
            <person name="Bonnefoy V."/>
            <person name="Krin E."/>
            <person name="Arsene-Ploetze F."/>
            <person name="Carapito C."/>
            <person name="Chandler M."/>
            <person name="Cournoyer B."/>
            <person name="Cruveiller S."/>
            <person name="Dossat C."/>
            <person name="Duval S."/>
            <person name="Heymann M."/>
            <person name="Leize E."/>
            <person name="Lieutaud A."/>
            <person name="Lievremont D."/>
            <person name="Makita Y."/>
            <person name="Mangenot S."/>
            <person name="Nitschke W."/>
            <person name="Ortet P."/>
            <person name="Perdrial N."/>
            <person name="Schoepp B."/>
            <person name="Siguier P."/>
            <person name="Simeonova D.D."/>
            <person name="Rouy Z."/>
            <person name="Segurens B."/>
            <person name="Turlin E."/>
            <person name="Vallenet D."/>
            <person name="van Dorsselaer A."/>
            <person name="Weiss S."/>
            <person name="Weissenbach J."/>
            <person name="Lett M.-C."/>
            <person name="Danchin A."/>
            <person name="Bertin P.N."/>
        </authorList>
    </citation>
    <scope>NUCLEOTIDE SEQUENCE [LARGE SCALE GENOMIC DNA]</scope>
    <source>
        <strain>ULPAs1</strain>
    </source>
</reference>
<keyword id="KW-0963">Cytoplasm</keyword>
<keyword id="KW-0396">Initiation factor</keyword>
<keyword id="KW-0648">Protein biosynthesis</keyword>
<keyword id="KW-1185">Reference proteome</keyword>
<keyword id="KW-0694">RNA-binding</keyword>
<keyword id="KW-0699">rRNA-binding</keyword>
<name>IF1_HERAR</name>
<protein>
    <recommendedName>
        <fullName evidence="1">Translation initiation factor IF-1</fullName>
    </recommendedName>
</protein>
<dbReference type="EMBL" id="CU207211">
    <property type="protein sequence ID" value="CAL63254.1"/>
    <property type="molecule type" value="Genomic_DNA"/>
</dbReference>
<dbReference type="SMR" id="A4G9R7"/>
<dbReference type="STRING" id="204773.HEAR3145"/>
<dbReference type="KEGG" id="har:HEAR3145"/>
<dbReference type="eggNOG" id="COG0361">
    <property type="taxonomic scope" value="Bacteria"/>
</dbReference>
<dbReference type="HOGENOM" id="CLU_151267_1_0_4"/>
<dbReference type="OrthoDB" id="9803250at2"/>
<dbReference type="Proteomes" id="UP000006697">
    <property type="component" value="Chromosome"/>
</dbReference>
<dbReference type="GO" id="GO:0005829">
    <property type="term" value="C:cytosol"/>
    <property type="evidence" value="ECO:0007669"/>
    <property type="project" value="TreeGrafter"/>
</dbReference>
<dbReference type="GO" id="GO:0043022">
    <property type="term" value="F:ribosome binding"/>
    <property type="evidence" value="ECO:0007669"/>
    <property type="project" value="UniProtKB-UniRule"/>
</dbReference>
<dbReference type="GO" id="GO:0019843">
    <property type="term" value="F:rRNA binding"/>
    <property type="evidence" value="ECO:0007669"/>
    <property type="project" value="UniProtKB-UniRule"/>
</dbReference>
<dbReference type="GO" id="GO:0003743">
    <property type="term" value="F:translation initiation factor activity"/>
    <property type="evidence" value="ECO:0007669"/>
    <property type="project" value="UniProtKB-UniRule"/>
</dbReference>
<dbReference type="CDD" id="cd04451">
    <property type="entry name" value="S1_IF1"/>
    <property type="match status" value="1"/>
</dbReference>
<dbReference type="FunFam" id="2.40.50.140:FF:000002">
    <property type="entry name" value="Translation initiation factor IF-1"/>
    <property type="match status" value="1"/>
</dbReference>
<dbReference type="Gene3D" id="2.40.50.140">
    <property type="entry name" value="Nucleic acid-binding proteins"/>
    <property type="match status" value="1"/>
</dbReference>
<dbReference type="HAMAP" id="MF_00075">
    <property type="entry name" value="IF_1"/>
    <property type="match status" value="1"/>
</dbReference>
<dbReference type="InterPro" id="IPR012340">
    <property type="entry name" value="NA-bd_OB-fold"/>
</dbReference>
<dbReference type="InterPro" id="IPR006196">
    <property type="entry name" value="RNA-binding_domain_S1_IF1"/>
</dbReference>
<dbReference type="InterPro" id="IPR003029">
    <property type="entry name" value="S1_domain"/>
</dbReference>
<dbReference type="InterPro" id="IPR004368">
    <property type="entry name" value="TIF_IF1"/>
</dbReference>
<dbReference type="NCBIfam" id="TIGR00008">
    <property type="entry name" value="infA"/>
    <property type="match status" value="1"/>
</dbReference>
<dbReference type="PANTHER" id="PTHR33370">
    <property type="entry name" value="TRANSLATION INITIATION FACTOR IF-1, CHLOROPLASTIC"/>
    <property type="match status" value="1"/>
</dbReference>
<dbReference type="PANTHER" id="PTHR33370:SF1">
    <property type="entry name" value="TRANSLATION INITIATION FACTOR IF-1, CHLOROPLASTIC"/>
    <property type="match status" value="1"/>
</dbReference>
<dbReference type="Pfam" id="PF01176">
    <property type="entry name" value="eIF-1a"/>
    <property type="match status" value="1"/>
</dbReference>
<dbReference type="SMART" id="SM00316">
    <property type="entry name" value="S1"/>
    <property type="match status" value="1"/>
</dbReference>
<dbReference type="SUPFAM" id="SSF50249">
    <property type="entry name" value="Nucleic acid-binding proteins"/>
    <property type="match status" value="1"/>
</dbReference>
<dbReference type="PROSITE" id="PS50832">
    <property type="entry name" value="S1_IF1_TYPE"/>
    <property type="match status" value="1"/>
</dbReference>
<comment type="function">
    <text evidence="1">One of the essential components for the initiation of protein synthesis. Stabilizes the binding of IF-2 and IF-3 on the 30S subunit to which N-formylmethionyl-tRNA(fMet) subsequently binds. Helps modulate mRNA selection, yielding the 30S pre-initiation complex (PIC). Upon addition of the 50S ribosomal subunit IF-1, IF-2 and IF-3 are released leaving the mature 70S translation initiation complex.</text>
</comment>
<comment type="subunit">
    <text evidence="1">Component of the 30S ribosomal translation pre-initiation complex which assembles on the 30S ribosome in the order IF-2 and IF-3, IF-1 and N-formylmethionyl-tRNA(fMet); mRNA recruitment can occur at any time during PIC assembly.</text>
</comment>
<comment type="subcellular location">
    <subcellularLocation>
        <location evidence="1">Cytoplasm</location>
    </subcellularLocation>
</comment>
<comment type="similarity">
    <text evidence="1">Belongs to the IF-1 family.</text>
</comment>
<evidence type="ECO:0000255" key="1">
    <source>
        <dbReference type="HAMAP-Rule" id="MF_00075"/>
    </source>
</evidence>
<gene>
    <name evidence="1" type="primary">infA</name>
    <name type="ordered locus">HEAR3145</name>
</gene>